<reference key="1">
    <citation type="journal article" date="2004" name="Proc. Natl. Acad. Sci. U.S.A.">
        <title>Complete genomes of two clinical Staphylococcus aureus strains: evidence for the rapid evolution of virulence and drug resistance.</title>
        <authorList>
            <person name="Holden M.T.G."/>
            <person name="Feil E.J."/>
            <person name="Lindsay J.A."/>
            <person name="Peacock S.J."/>
            <person name="Day N.P.J."/>
            <person name="Enright M.C."/>
            <person name="Foster T.J."/>
            <person name="Moore C.E."/>
            <person name="Hurst L."/>
            <person name="Atkin R."/>
            <person name="Barron A."/>
            <person name="Bason N."/>
            <person name="Bentley S.D."/>
            <person name="Chillingworth C."/>
            <person name="Chillingworth T."/>
            <person name="Churcher C."/>
            <person name="Clark L."/>
            <person name="Corton C."/>
            <person name="Cronin A."/>
            <person name="Doggett J."/>
            <person name="Dowd L."/>
            <person name="Feltwell T."/>
            <person name="Hance Z."/>
            <person name="Harris B."/>
            <person name="Hauser H."/>
            <person name="Holroyd S."/>
            <person name="Jagels K."/>
            <person name="James K.D."/>
            <person name="Lennard N."/>
            <person name="Line A."/>
            <person name="Mayes R."/>
            <person name="Moule S."/>
            <person name="Mungall K."/>
            <person name="Ormond D."/>
            <person name="Quail M.A."/>
            <person name="Rabbinowitsch E."/>
            <person name="Rutherford K.M."/>
            <person name="Sanders M."/>
            <person name="Sharp S."/>
            <person name="Simmonds M."/>
            <person name="Stevens K."/>
            <person name="Whitehead S."/>
            <person name="Barrell B.G."/>
            <person name="Spratt B.G."/>
            <person name="Parkhill J."/>
        </authorList>
    </citation>
    <scope>NUCLEOTIDE SEQUENCE [LARGE SCALE GENOMIC DNA]</scope>
    <source>
        <strain>MSSA476</strain>
    </source>
</reference>
<keyword id="KW-0030">Aminoacyl-tRNA synthetase</keyword>
<keyword id="KW-0067">ATP-binding</keyword>
<keyword id="KW-0963">Cytoplasm</keyword>
<keyword id="KW-0436">Ligase</keyword>
<keyword id="KW-0547">Nucleotide-binding</keyword>
<keyword id="KW-0648">Protein biosynthesis</keyword>
<evidence type="ECO:0000255" key="1">
    <source>
        <dbReference type="HAMAP-Rule" id="MF_00123"/>
    </source>
</evidence>
<organism>
    <name type="scientific">Staphylococcus aureus (strain MSSA476)</name>
    <dbReference type="NCBI Taxonomy" id="282459"/>
    <lineage>
        <taxon>Bacteria</taxon>
        <taxon>Bacillati</taxon>
        <taxon>Bacillota</taxon>
        <taxon>Bacilli</taxon>
        <taxon>Bacillales</taxon>
        <taxon>Staphylococcaceae</taxon>
        <taxon>Staphylococcus</taxon>
    </lineage>
</organism>
<protein>
    <recommendedName>
        <fullName evidence="1">Arginine--tRNA ligase</fullName>
        <ecNumber evidence="1">6.1.1.19</ecNumber>
    </recommendedName>
    <alternativeName>
        <fullName evidence="1">Arginyl-tRNA synthetase</fullName>
        <shortName evidence="1">ArgRS</shortName>
    </alternativeName>
</protein>
<proteinExistence type="inferred from homology"/>
<feature type="chain" id="PRO_0000151609" description="Arginine--tRNA ligase">
    <location>
        <begin position="1"/>
        <end position="553"/>
    </location>
</feature>
<feature type="short sequence motif" description="'HIGH' region">
    <location>
        <begin position="130"/>
        <end position="140"/>
    </location>
</feature>
<name>SYR_STAAS</name>
<dbReference type="EC" id="6.1.1.19" evidence="1"/>
<dbReference type="EMBL" id="BX571857">
    <property type="protein sequence ID" value="CAG42350.1"/>
    <property type="molecule type" value="Genomic_DNA"/>
</dbReference>
<dbReference type="RefSeq" id="WP_001021136.1">
    <property type="nucleotide sequence ID" value="NC_002953.3"/>
</dbReference>
<dbReference type="SMR" id="Q6GBM1"/>
<dbReference type="KEGG" id="sas:SAS0575"/>
<dbReference type="HOGENOM" id="CLU_006406_0_1_9"/>
<dbReference type="GO" id="GO:0005737">
    <property type="term" value="C:cytoplasm"/>
    <property type="evidence" value="ECO:0007669"/>
    <property type="project" value="UniProtKB-SubCell"/>
</dbReference>
<dbReference type="GO" id="GO:0004814">
    <property type="term" value="F:arginine-tRNA ligase activity"/>
    <property type="evidence" value="ECO:0007669"/>
    <property type="project" value="UniProtKB-UniRule"/>
</dbReference>
<dbReference type="GO" id="GO:0005524">
    <property type="term" value="F:ATP binding"/>
    <property type="evidence" value="ECO:0007669"/>
    <property type="project" value="UniProtKB-UniRule"/>
</dbReference>
<dbReference type="GO" id="GO:0006420">
    <property type="term" value="P:arginyl-tRNA aminoacylation"/>
    <property type="evidence" value="ECO:0007669"/>
    <property type="project" value="UniProtKB-UniRule"/>
</dbReference>
<dbReference type="CDD" id="cd00671">
    <property type="entry name" value="ArgRS_core"/>
    <property type="match status" value="1"/>
</dbReference>
<dbReference type="FunFam" id="1.10.730.10:FF:000008">
    <property type="entry name" value="Arginine--tRNA ligase"/>
    <property type="match status" value="1"/>
</dbReference>
<dbReference type="FunFam" id="3.30.1360.70:FF:000003">
    <property type="entry name" value="Arginine--tRNA ligase"/>
    <property type="match status" value="1"/>
</dbReference>
<dbReference type="FunFam" id="3.40.50.620:FF:000062">
    <property type="entry name" value="Arginine--tRNA ligase"/>
    <property type="match status" value="1"/>
</dbReference>
<dbReference type="Gene3D" id="3.30.1360.70">
    <property type="entry name" value="Arginyl tRNA synthetase N-terminal domain"/>
    <property type="match status" value="1"/>
</dbReference>
<dbReference type="Gene3D" id="3.40.50.620">
    <property type="entry name" value="HUPs"/>
    <property type="match status" value="1"/>
</dbReference>
<dbReference type="Gene3D" id="1.10.730.10">
    <property type="entry name" value="Isoleucyl-tRNA Synthetase, Domain 1"/>
    <property type="match status" value="1"/>
</dbReference>
<dbReference type="HAMAP" id="MF_00123">
    <property type="entry name" value="Arg_tRNA_synth"/>
    <property type="match status" value="1"/>
</dbReference>
<dbReference type="InterPro" id="IPR001412">
    <property type="entry name" value="aa-tRNA-synth_I_CS"/>
</dbReference>
<dbReference type="InterPro" id="IPR001278">
    <property type="entry name" value="Arg-tRNA-ligase"/>
</dbReference>
<dbReference type="InterPro" id="IPR005148">
    <property type="entry name" value="Arg-tRNA-synth_N"/>
</dbReference>
<dbReference type="InterPro" id="IPR036695">
    <property type="entry name" value="Arg-tRNA-synth_N_sf"/>
</dbReference>
<dbReference type="InterPro" id="IPR035684">
    <property type="entry name" value="ArgRS_core"/>
</dbReference>
<dbReference type="InterPro" id="IPR008909">
    <property type="entry name" value="DALR_anticod-bd"/>
</dbReference>
<dbReference type="InterPro" id="IPR014729">
    <property type="entry name" value="Rossmann-like_a/b/a_fold"/>
</dbReference>
<dbReference type="InterPro" id="IPR009080">
    <property type="entry name" value="tRNAsynth_Ia_anticodon-bd"/>
</dbReference>
<dbReference type="NCBIfam" id="TIGR00456">
    <property type="entry name" value="argS"/>
    <property type="match status" value="1"/>
</dbReference>
<dbReference type="PANTHER" id="PTHR11956:SF5">
    <property type="entry name" value="ARGININE--TRNA LIGASE, CYTOPLASMIC"/>
    <property type="match status" value="1"/>
</dbReference>
<dbReference type="PANTHER" id="PTHR11956">
    <property type="entry name" value="ARGINYL-TRNA SYNTHETASE"/>
    <property type="match status" value="1"/>
</dbReference>
<dbReference type="Pfam" id="PF03485">
    <property type="entry name" value="Arg_tRNA_synt_N"/>
    <property type="match status" value="1"/>
</dbReference>
<dbReference type="Pfam" id="PF05746">
    <property type="entry name" value="DALR_1"/>
    <property type="match status" value="1"/>
</dbReference>
<dbReference type="Pfam" id="PF00750">
    <property type="entry name" value="tRNA-synt_1d"/>
    <property type="match status" value="1"/>
</dbReference>
<dbReference type="PRINTS" id="PR01038">
    <property type="entry name" value="TRNASYNTHARG"/>
</dbReference>
<dbReference type="SMART" id="SM01016">
    <property type="entry name" value="Arg_tRNA_synt_N"/>
    <property type="match status" value="1"/>
</dbReference>
<dbReference type="SMART" id="SM00836">
    <property type="entry name" value="DALR_1"/>
    <property type="match status" value="1"/>
</dbReference>
<dbReference type="SUPFAM" id="SSF47323">
    <property type="entry name" value="Anticodon-binding domain of a subclass of class I aminoacyl-tRNA synthetases"/>
    <property type="match status" value="1"/>
</dbReference>
<dbReference type="SUPFAM" id="SSF55190">
    <property type="entry name" value="Arginyl-tRNA synthetase (ArgRS), N-terminal 'additional' domain"/>
    <property type="match status" value="1"/>
</dbReference>
<dbReference type="SUPFAM" id="SSF52374">
    <property type="entry name" value="Nucleotidylyl transferase"/>
    <property type="match status" value="1"/>
</dbReference>
<dbReference type="PROSITE" id="PS00178">
    <property type="entry name" value="AA_TRNA_LIGASE_I"/>
    <property type="match status" value="1"/>
</dbReference>
<accession>Q6GBM1</accession>
<comment type="catalytic activity">
    <reaction evidence="1">
        <text>tRNA(Arg) + L-arginine + ATP = L-arginyl-tRNA(Arg) + AMP + diphosphate</text>
        <dbReference type="Rhea" id="RHEA:20301"/>
        <dbReference type="Rhea" id="RHEA-COMP:9658"/>
        <dbReference type="Rhea" id="RHEA-COMP:9673"/>
        <dbReference type="ChEBI" id="CHEBI:30616"/>
        <dbReference type="ChEBI" id="CHEBI:32682"/>
        <dbReference type="ChEBI" id="CHEBI:33019"/>
        <dbReference type="ChEBI" id="CHEBI:78442"/>
        <dbReference type="ChEBI" id="CHEBI:78513"/>
        <dbReference type="ChEBI" id="CHEBI:456215"/>
        <dbReference type="EC" id="6.1.1.19"/>
    </reaction>
</comment>
<comment type="subunit">
    <text evidence="1">Monomer.</text>
</comment>
<comment type="subcellular location">
    <subcellularLocation>
        <location evidence="1">Cytoplasm</location>
    </subcellularLocation>
</comment>
<comment type="similarity">
    <text evidence="1">Belongs to the class-I aminoacyl-tRNA synthetase family.</text>
</comment>
<sequence>MNIIDQVKQTLVEEIAASINKAGLADEIPDIKIEVPKDTKNGDYATNIAMVLTKIAKRNPREIAQAIVDNLDTEKAHVKQIDIAGPGFINFYLDNQYLTAIIPEAIEKGDQFGHVNESKGQNVLLEYVSANPTGDLHIGHARNAAVGDALANILTAAGYNVTREYYINDAGNQITNLARSIETRFFEALGDNSYSMPEDGYNGKDIIEIGKDLAEKHPEIKDYSEEARLKEFRKLGVEYEMAKLKNDLAEFNTHFDNWFSETSLYEKCEILEVLAKMKELGYTYEADGATWLRTTDFKDDKDRVLIKNDGTYTYFLPDIAYHFDKVKRGNDILIDLFGADHHGYINRLKASLETFGVDSNRLEIQIMQMVRLMENGKEVKMSKRTGNAITLREIMDEVGVDAARYFLTMRSPDSHFDFDMELAKEQSQDNPVYYAQYAHARICSILKQAKEQGIEVTAANDFTTITNEKAIELLKKVADFEPTIESAAEHRSAHRITNYIQDLASHFHKFYNAEKVLTDDIEKTKAHVAMIEAVRITLKNALAMVGVSAPESM</sequence>
<gene>
    <name evidence="1" type="primary">argS</name>
    <name type="ordered locus">SAS0575</name>
</gene>